<sequence length="433" mass="48458">MSFPKELEKVLEITKAQNVWRRTQTLNLIASENVMSPLAESVYMSDFMSRYAEGKPYKRYYQGTKYTDEIETLAMDLMNEITNSKDCDLRPTSGTIANAAVFRVLAEPGDKALIAPVQAGAHVSHTKFGTLGALGIQHIEMPFDEENINVDVDKAIKMIEEVKPKFVVLGGSLYLFPHPTKELAPHVHAVGAKLVYDAAHVYGLIEGKVWSSPLKEGADIMTVSTHKTFPGPQGGAIFSDGSEVFKQVSRTIFPWFVSNHHLHRLPATAVTAIEMKYFGESYANQITRNSKALAEALAERGFKVIGENLGYTKSHQVAVDVRQFGGGNKIAKLLEDANIIVNKNLLPYDKPENVSDPSGLRIGVQEMTRYGMKESEMEEIAELFKKVIIDKKDVNEVKKEVIDMRKNFLEVKYTFDDMKDLEKYSSKSLKLII</sequence>
<organism>
    <name type="scientific">Saccharolobus islandicus (strain Y.N.15.51 / Yellowstone #2)</name>
    <name type="common">Sulfolobus islandicus</name>
    <dbReference type="NCBI Taxonomy" id="419942"/>
    <lineage>
        <taxon>Archaea</taxon>
        <taxon>Thermoproteota</taxon>
        <taxon>Thermoprotei</taxon>
        <taxon>Sulfolobales</taxon>
        <taxon>Sulfolobaceae</taxon>
        <taxon>Saccharolobus</taxon>
    </lineage>
</organism>
<gene>
    <name evidence="1" type="primary">glyA</name>
    <name type="ordered locus">YN1551_1249</name>
</gene>
<protein>
    <recommendedName>
        <fullName evidence="1">Serine hydroxymethyltransferase</fullName>
        <shortName evidence="1">SHMT</shortName>
        <shortName evidence="1">Serine methylase</shortName>
        <ecNumber evidence="1">2.1.2.-</ecNumber>
    </recommendedName>
</protein>
<reference key="1">
    <citation type="journal article" date="2009" name="Proc. Natl. Acad. Sci. U.S.A.">
        <title>Biogeography of the Sulfolobus islandicus pan-genome.</title>
        <authorList>
            <person name="Reno M.L."/>
            <person name="Held N.L."/>
            <person name="Fields C.J."/>
            <person name="Burke P.V."/>
            <person name="Whitaker R.J."/>
        </authorList>
    </citation>
    <scope>NUCLEOTIDE SEQUENCE [LARGE SCALE GENOMIC DNA]</scope>
    <source>
        <strain>Y.N.15.51 / Yellowstone #2</strain>
    </source>
</reference>
<name>GLYA_SACI1</name>
<dbReference type="EC" id="2.1.2.-" evidence="1"/>
<dbReference type="EMBL" id="CP001404">
    <property type="protein sequence ID" value="ACP48344.1"/>
    <property type="molecule type" value="Genomic_DNA"/>
</dbReference>
<dbReference type="RefSeq" id="WP_012717389.1">
    <property type="nucleotide sequence ID" value="NC_012623.1"/>
</dbReference>
<dbReference type="SMR" id="C3NGT4"/>
<dbReference type="GeneID" id="84058988"/>
<dbReference type="KEGG" id="sin:YN1551_1249"/>
<dbReference type="HOGENOM" id="CLU_022477_2_1_2"/>
<dbReference type="UniPathway" id="UPA00288">
    <property type="reaction ID" value="UER01023"/>
</dbReference>
<dbReference type="Proteomes" id="UP000006818">
    <property type="component" value="Chromosome"/>
</dbReference>
<dbReference type="GO" id="GO:0005737">
    <property type="term" value="C:cytoplasm"/>
    <property type="evidence" value="ECO:0007669"/>
    <property type="project" value="UniProtKB-SubCell"/>
</dbReference>
<dbReference type="GO" id="GO:0004372">
    <property type="term" value="F:glycine hydroxymethyltransferase activity"/>
    <property type="evidence" value="ECO:0007669"/>
    <property type="project" value="UniProtKB-UniRule"/>
</dbReference>
<dbReference type="GO" id="GO:0030170">
    <property type="term" value="F:pyridoxal phosphate binding"/>
    <property type="evidence" value="ECO:0007669"/>
    <property type="project" value="UniProtKB-UniRule"/>
</dbReference>
<dbReference type="GO" id="GO:0019264">
    <property type="term" value="P:glycine biosynthetic process from serine"/>
    <property type="evidence" value="ECO:0007669"/>
    <property type="project" value="UniProtKB-UniRule"/>
</dbReference>
<dbReference type="GO" id="GO:0035999">
    <property type="term" value="P:tetrahydrofolate interconversion"/>
    <property type="evidence" value="ECO:0007669"/>
    <property type="project" value="InterPro"/>
</dbReference>
<dbReference type="CDD" id="cd00378">
    <property type="entry name" value="SHMT"/>
    <property type="match status" value="1"/>
</dbReference>
<dbReference type="FunFam" id="3.40.640.10:FF:000101">
    <property type="entry name" value="Serine hydroxymethyltransferase"/>
    <property type="match status" value="1"/>
</dbReference>
<dbReference type="FunFam" id="3.90.1150.10:FF:000136">
    <property type="entry name" value="Serine hydroxymethyltransferase"/>
    <property type="match status" value="1"/>
</dbReference>
<dbReference type="Gene3D" id="3.90.1150.10">
    <property type="entry name" value="Aspartate Aminotransferase, domain 1"/>
    <property type="match status" value="1"/>
</dbReference>
<dbReference type="Gene3D" id="3.40.640.10">
    <property type="entry name" value="Type I PLP-dependent aspartate aminotransferase-like (Major domain)"/>
    <property type="match status" value="1"/>
</dbReference>
<dbReference type="HAMAP" id="MF_00051">
    <property type="entry name" value="SHMT"/>
    <property type="match status" value="1"/>
</dbReference>
<dbReference type="InterPro" id="IPR015424">
    <property type="entry name" value="PyrdxlP-dep_Trfase"/>
</dbReference>
<dbReference type="InterPro" id="IPR015421">
    <property type="entry name" value="PyrdxlP-dep_Trfase_major"/>
</dbReference>
<dbReference type="InterPro" id="IPR015422">
    <property type="entry name" value="PyrdxlP-dep_Trfase_small"/>
</dbReference>
<dbReference type="InterPro" id="IPR001085">
    <property type="entry name" value="Ser_HO-MeTrfase"/>
</dbReference>
<dbReference type="InterPro" id="IPR049943">
    <property type="entry name" value="Ser_HO-MeTrfase-like"/>
</dbReference>
<dbReference type="InterPro" id="IPR019798">
    <property type="entry name" value="Ser_HO-MeTrfase_PLP_BS"/>
</dbReference>
<dbReference type="InterPro" id="IPR039429">
    <property type="entry name" value="SHMT-like_dom"/>
</dbReference>
<dbReference type="NCBIfam" id="NF000586">
    <property type="entry name" value="PRK00011.1"/>
    <property type="match status" value="1"/>
</dbReference>
<dbReference type="PANTHER" id="PTHR11680">
    <property type="entry name" value="SERINE HYDROXYMETHYLTRANSFERASE"/>
    <property type="match status" value="1"/>
</dbReference>
<dbReference type="PANTHER" id="PTHR11680:SF35">
    <property type="entry name" value="SERINE HYDROXYMETHYLTRANSFERASE 1"/>
    <property type="match status" value="1"/>
</dbReference>
<dbReference type="Pfam" id="PF00464">
    <property type="entry name" value="SHMT"/>
    <property type="match status" value="1"/>
</dbReference>
<dbReference type="PIRSF" id="PIRSF000412">
    <property type="entry name" value="SHMT"/>
    <property type="match status" value="1"/>
</dbReference>
<dbReference type="SUPFAM" id="SSF53383">
    <property type="entry name" value="PLP-dependent transferases"/>
    <property type="match status" value="1"/>
</dbReference>
<dbReference type="PROSITE" id="PS00096">
    <property type="entry name" value="SHMT"/>
    <property type="match status" value="1"/>
</dbReference>
<evidence type="ECO:0000255" key="1">
    <source>
        <dbReference type="HAMAP-Rule" id="MF_00051"/>
    </source>
</evidence>
<proteinExistence type="inferred from homology"/>
<keyword id="KW-0028">Amino-acid biosynthesis</keyword>
<keyword id="KW-0963">Cytoplasm</keyword>
<keyword id="KW-0554">One-carbon metabolism</keyword>
<keyword id="KW-0663">Pyridoxal phosphate</keyword>
<keyword id="KW-0808">Transferase</keyword>
<comment type="function">
    <text evidence="1">Catalyzes the reversible interconversion of serine and glycine with a modified folate serving as the one-carbon carrier. Also exhibits a pteridine-independent aldolase activity toward beta-hydroxyamino acids, producing glycine and aldehydes, via a retro-aldol mechanism.</text>
</comment>
<comment type="cofactor">
    <cofactor evidence="1">
        <name>pyridoxal 5'-phosphate</name>
        <dbReference type="ChEBI" id="CHEBI:597326"/>
    </cofactor>
</comment>
<comment type="pathway">
    <text evidence="1">Amino-acid biosynthesis; glycine biosynthesis; glycine from L-serine: step 1/1.</text>
</comment>
<comment type="subunit">
    <text evidence="1">Homodimer.</text>
</comment>
<comment type="subcellular location">
    <subcellularLocation>
        <location evidence="1">Cytoplasm</location>
    </subcellularLocation>
</comment>
<comment type="similarity">
    <text evidence="1">Belongs to the SHMT family.</text>
</comment>
<accession>C3NGT4</accession>
<feature type="chain" id="PRO_1000202275" description="Serine hydroxymethyltransferase">
    <location>
        <begin position="1"/>
        <end position="433"/>
    </location>
</feature>
<feature type="binding site" evidence="1">
    <location>
        <begin position="121"/>
        <end position="123"/>
    </location>
    <ligand>
        <name>(6S)-5,6,7,8-tetrahydrofolate</name>
        <dbReference type="ChEBI" id="CHEBI:57453"/>
    </ligand>
</feature>
<feature type="binding site" evidence="1">
    <location>
        <position position="243"/>
    </location>
    <ligand>
        <name>(6S)-5,6,7,8-tetrahydrofolate</name>
        <dbReference type="ChEBI" id="CHEBI:57453"/>
    </ligand>
</feature>
<feature type="site" description="Plays an important role in substrate specificity" evidence="1">
    <location>
        <position position="226"/>
    </location>
</feature>
<feature type="modified residue" description="N6-(pyridoxal phosphate)lysine" evidence="1">
    <location>
        <position position="227"/>
    </location>
</feature>